<organism>
    <name type="scientific">Beutenbergia cavernae (strain ATCC BAA-8 / DSM 12333 / CCUG 43141 / JCM 11478 / NBRC 16432 / NCIMB 13614 / HKI 0122)</name>
    <dbReference type="NCBI Taxonomy" id="471853"/>
    <lineage>
        <taxon>Bacteria</taxon>
        <taxon>Bacillati</taxon>
        <taxon>Actinomycetota</taxon>
        <taxon>Actinomycetes</taxon>
        <taxon>Micrococcales</taxon>
        <taxon>Beutenbergiaceae</taxon>
        <taxon>Beutenbergia</taxon>
    </lineage>
</organism>
<proteinExistence type="inferred from homology"/>
<comment type="function">
    <text evidence="1">Catalyzes the NADPH-dependent rearrangement and reduction of 1-deoxy-D-xylulose-5-phosphate (DXP) to 2-C-methyl-D-erythritol 4-phosphate (MEP).</text>
</comment>
<comment type="catalytic activity">
    <reaction evidence="1">
        <text>2-C-methyl-D-erythritol 4-phosphate + NADP(+) = 1-deoxy-D-xylulose 5-phosphate + NADPH + H(+)</text>
        <dbReference type="Rhea" id="RHEA:13717"/>
        <dbReference type="ChEBI" id="CHEBI:15378"/>
        <dbReference type="ChEBI" id="CHEBI:57783"/>
        <dbReference type="ChEBI" id="CHEBI:57792"/>
        <dbReference type="ChEBI" id="CHEBI:58262"/>
        <dbReference type="ChEBI" id="CHEBI:58349"/>
        <dbReference type="EC" id="1.1.1.267"/>
    </reaction>
    <physiologicalReaction direction="right-to-left" evidence="1">
        <dbReference type="Rhea" id="RHEA:13719"/>
    </physiologicalReaction>
</comment>
<comment type="cofactor">
    <cofactor evidence="1">
        <name>Mg(2+)</name>
        <dbReference type="ChEBI" id="CHEBI:18420"/>
    </cofactor>
    <cofactor evidence="1">
        <name>Mn(2+)</name>
        <dbReference type="ChEBI" id="CHEBI:29035"/>
    </cofactor>
</comment>
<comment type="pathway">
    <text evidence="1">Isoprenoid biosynthesis; isopentenyl diphosphate biosynthesis via DXP pathway; isopentenyl diphosphate from 1-deoxy-D-xylulose 5-phosphate: step 1/6.</text>
</comment>
<comment type="similarity">
    <text evidence="1">Belongs to the DXR family.</text>
</comment>
<gene>
    <name evidence="1" type="primary">dxr</name>
    <name type="ordered locus">Bcav_2500</name>
</gene>
<sequence length="394" mass="40193">MSARTVVLLGSTGSIGTQALDVVAAAPGRFQVVGLAAGGSDLELLARQAVAHDVPVVAVAAGEQDDVAAAIRAAGGRRTEVLTGPGAAADLAGRGADVVLNGITGSVGLAPTLAALEAGSTLALANKESLVAGAALVRAAQQRADQIVPVDSEHSAIAQALRSGARSEVARLVLTASGGPFRGWSREQMAGVTPEQALAHPTWAMGPVVTTNSATLMNKGLELIEAHVLFDVPVADITVVVHPQSVVHSMVEFVDGSTIAQASPPDMRLPIALGLAWPDRVPGAASPCRWDAATSWTFEPVDDAAFPALDLAREAVKASPLHPAVLNAANEEAVAAFLDGRLPFLDVVGTVARVLGEYPDPPDGALSLEGVQAAEAWARARSRALVADGPSRER</sequence>
<dbReference type="EC" id="1.1.1.267" evidence="1"/>
<dbReference type="EMBL" id="CP001618">
    <property type="protein sequence ID" value="ACQ80750.1"/>
    <property type="molecule type" value="Genomic_DNA"/>
</dbReference>
<dbReference type="RefSeq" id="WP_015882990.1">
    <property type="nucleotide sequence ID" value="NC_012669.1"/>
</dbReference>
<dbReference type="SMR" id="C5BWT4"/>
<dbReference type="STRING" id="471853.Bcav_2500"/>
<dbReference type="KEGG" id="bcv:Bcav_2500"/>
<dbReference type="eggNOG" id="COG0743">
    <property type="taxonomic scope" value="Bacteria"/>
</dbReference>
<dbReference type="HOGENOM" id="CLU_035714_4_0_11"/>
<dbReference type="OrthoDB" id="9806546at2"/>
<dbReference type="UniPathway" id="UPA00056">
    <property type="reaction ID" value="UER00092"/>
</dbReference>
<dbReference type="Proteomes" id="UP000007962">
    <property type="component" value="Chromosome"/>
</dbReference>
<dbReference type="GO" id="GO:0030604">
    <property type="term" value="F:1-deoxy-D-xylulose-5-phosphate reductoisomerase activity"/>
    <property type="evidence" value="ECO:0007669"/>
    <property type="project" value="UniProtKB-UniRule"/>
</dbReference>
<dbReference type="GO" id="GO:0030145">
    <property type="term" value="F:manganese ion binding"/>
    <property type="evidence" value="ECO:0007669"/>
    <property type="project" value="TreeGrafter"/>
</dbReference>
<dbReference type="GO" id="GO:0070402">
    <property type="term" value="F:NADPH binding"/>
    <property type="evidence" value="ECO:0007669"/>
    <property type="project" value="InterPro"/>
</dbReference>
<dbReference type="GO" id="GO:0051484">
    <property type="term" value="P:isopentenyl diphosphate biosynthetic process, methylerythritol 4-phosphate pathway involved in terpenoid biosynthetic process"/>
    <property type="evidence" value="ECO:0007669"/>
    <property type="project" value="TreeGrafter"/>
</dbReference>
<dbReference type="FunFam" id="3.40.50.720:FF:000045">
    <property type="entry name" value="1-deoxy-D-xylulose 5-phosphate reductoisomerase"/>
    <property type="match status" value="1"/>
</dbReference>
<dbReference type="Gene3D" id="1.10.1740.10">
    <property type="match status" value="1"/>
</dbReference>
<dbReference type="Gene3D" id="3.40.50.720">
    <property type="entry name" value="NAD(P)-binding Rossmann-like Domain"/>
    <property type="match status" value="1"/>
</dbReference>
<dbReference type="HAMAP" id="MF_00183">
    <property type="entry name" value="DXP_reductoisom"/>
    <property type="match status" value="1"/>
</dbReference>
<dbReference type="InterPro" id="IPR003821">
    <property type="entry name" value="DXP_reductoisomerase"/>
</dbReference>
<dbReference type="InterPro" id="IPR013644">
    <property type="entry name" value="DXP_reductoisomerase_C"/>
</dbReference>
<dbReference type="InterPro" id="IPR013512">
    <property type="entry name" value="DXP_reductoisomerase_N"/>
</dbReference>
<dbReference type="InterPro" id="IPR026877">
    <property type="entry name" value="DXPR_C"/>
</dbReference>
<dbReference type="InterPro" id="IPR036169">
    <property type="entry name" value="DXPR_C_sf"/>
</dbReference>
<dbReference type="InterPro" id="IPR036291">
    <property type="entry name" value="NAD(P)-bd_dom_sf"/>
</dbReference>
<dbReference type="NCBIfam" id="TIGR00243">
    <property type="entry name" value="Dxr"/>
    <property type="match status" value="1"/>
</dbReference>
<dbReference type="PANTHER" id="PTHR30525">
    <property type="entry name" value="1-DEOXY-D-XYLULOSE 5-PHOSPHATE REDUCTOISOMERASE"/>
    <property type="match status" value="1"/>
</dbReference>
<dbReference type="PANTHER" id="PTHR30525:SF0">
    <property type="entry name" value="1-DEOXY-D-XYLULOSE 5-PHOSPHATE REDUCTOISOMERASE, CHLOROPLASTIC"/>
    <property type="match status" value="1"/>
</dbReference>
<dbReference type="Pfam" id="PF08436">
    <property type="entry name" value="DXP_redisom_C"/>
    <property type="match status" value="1"/>
</dbReference>
<dbReference type="Pfam" id="PF02670">
    <property type="entry name" value="DXP_reductoisom"/>
    <property type="match status" value="1"/>
</dbReference>
<dbReference type="Pfam" id="PF13288">
    <property type="entry name" value="DXPR_C"/>
    <property type="match status" value="1"/>
</dbReference>
<dbReference type="PIRSF" id="PIRSF006205">
    <property type="entry name" value="Dxp_reductismrs"/>
    <property type="match status" value="1"/>
</dbReference>
<dbReference type="SUPFAM" id="SSF69055">
    <property type="entry name" value="1-deoxy-D-xylulose-5-phosphate reductoisomerase, C-terminal domain"/>
    <property type="match status" value="1"/>
</dbReference>
<dbReference type="SUPFAM" id="SSF55347">
    <property type="entry name" value="Glyceraldehyde-3-phosphate dehydrogenase-like, C-terminal domain"/>
    <property type="match status" value="1"/>
</dbReference>
<dbReference type="SUPFAM" id="SSF51735">
    <property type="entry name" value="NAD(P)-binding Rossmann-fold domains"/>
    <property type="match status" value="1"/>
</dbReference>
<reference key="1">
    <citation type="journal article" date="2009" name="Stand. Genomic Sci.">
        <title>Complete genome sequence of Beutenbergia cavernae type strain (HKI 0122).</title>
        <authorList>
            <person name="Land M."/>
            <person name="Pukall R."/>
            <person name="Abt B."/>
            <person name="Goker M."/>
            <person name="Rohde M."/>
            <person name="Glavina Del Rio T."/>
            <person name="Tice H."/>
            <person name="Copeland A."/>
            <person name="Cheng J.F."/>
            <person name="Lucas S."/>
            <person name="Chen F."/>
            <person name="Nolan M."/>
            <person name="Bruce D."/>
            <person name="Goodwin L."/>
            <person name="Pitluck S."/>
            <person name="Ivanova N."/>
            <person name="Mavromatis K."/>
            <person name="Ovchinnikova G."/>
            <person name="Pati A."/>
            <person name="Chen A."/>
            <person name="Palaniappan K."/>
            <person name="Hauser L."/>
            <person name="Chang Y.J."/>
            <person name="Jefferies C.C."/>
            <person name="Saunders E."/>
            <person name="Brettin T."/>
            <person name="Detter J.C."/>
            <person name="Han C."/>
            <person name="Chain P."/>
            <person name="Bristow J."/>
            <person name="Eisen J.A."/>
            <person name="Markowitz V."/>
            <person name="Hugenholtz P."/>
            <person name="Kyrpides N.C."/>
            <person name="Klenk H.P."/>
            <person name="Lapidus A."/>
        </authorList>
    </citation>
    <scope>NUCLEOTIDE SEQUENCE [LARGE SCALE GENOMIC DNA]</scope>
    <source>
        <strain>ATCC BAA-8 / DSM 12333 / CCUG 43141 / JCM 11478 / NBRC 16432 / NCIMB 13614 / HKI 0122</strain>
    </source>
</reference>
<name>DXR_BEUC1</name>
<protein>
    <recommendedName>
        <fullName evidence="1">1-deoxy-D-xylulose 5-phosphate reductoisomerase</fullName>
        <shortName evidence="1">DXP reductoisomerase</shortName>
        <ecNumber evidence="1">1.1.1.267</ecNumber>
    </recommendedName>
    <alternativeName>
        <fullName evidence="1">1-deoxyxylulose-5-phosphate reductoisomerase</fullName>
    </alternativeName>
    <alternativeName>
        <fullName evidence="1">2-C-methyl-D-erythritol 4-phosphate synthase</fullName>
    </alternativeName>
</protein>
<accession>C5BWT4</accession>
<evidence type="ECO:0000255" key="1">
    <source>
        <dbReference type="HAMAP-Rule" id="MF_00183"/>
    </source>
</evidence>
<feature type="chain" id="PRO_1000203882" description="1-deoxy-D-xylulose 5-phosphate reductoisomerase">
    <location>
        <begin position="1"/>
        <end position="394"/>
    </location>
</feature>
<feature type="binding site" evidence="1">
    <location>
        <position position="12"/>
    </location>
    <ligand>
        <name>NADPH</name>
        <dbReference type="ChEBI" id="CHEBI:57783"/>
    </ligand>
</feature>
<feature type="binding site" evidence="1">
    <location>
        <position position="13"/>
    </location>
    <ligand>
        <name>NADPH</name>
        <dbReference type="ChEBI" id="CHEBI:57783"/>
    </ligand>
</feature>
<feature type="binding site" evidence="1">
    <location>
        <position position="14"/>
    </location>
    <ligand>
        <name>NADPH</name>
        <dbReference type="ChEBI" id="CHEBI:57783"/>
    </ligand>
</feature>
<feature type="binding site" evidence="1">
    <location>
        <position position="15"/>
    </location>
    <ligand>
        <name>NADPH</name>
        <dbReference type="ChEBI" id="CHEBI:57783"/>
    </ligand>
</feature>
<feature type="binding site" evidence="1">
    <location>
        <position position="38"/>
    </location>
    <ligand>
        <name>NADPH</name>
        <dbReference type="ChEBI" id="CHEBI:57783"/>
    </ligand>
</feature>
<feature type="binding site" evidence="1">
    <location>
        <position position="126"/>
    </location>
    <ligand>
        <name>NADPH</name>
        <dbReference type="ChEBI" id="CHEBI:57783"/>
    </ligand>
</feature>
<feature type="binding site" evidence="1">
    <location>
        <position position="127"/>
    </location>
    <ligand>
        <name>1-deoxy-D-xylulose 5-phosphate</name>
        <dbReference type="ChEBI" id="CHEBI:57792"/>
    </ligand>
</feature>
<feature type="binding site" evidence="1">
    <location>
        <position position="128"/>
    </location>
    <ligand>
        <name>NADPH</name>
        <dbReference type="ChEBI" id="CHEBI:57783"/>
    </ligand>
</feature>
<feature type="binding site" evidence="1">
    <location>
        <position position="151"/>
    </location>
    <ligand>
        <name>Mn(2+)</name>
        <dbReference type="ChEBI" id="CHEBI:29035"/>
    </ligand>
</feature>
<feature type="binding site" evidence="1">
    <location>
        <position position="152"/>
    </location>
    <ligand>
        <name>1-deoxy-D-xylulose 5-phosphate</name>
        <dbReference type="ChEBI" id="CHEBI:57792"/>
    </ligand>
</feature>
<feature type="binding site" evidence="1">
    <location>
        <position position="153"/>
    </location>
    <ligand>
        <name>1-deoxy-D-xylulose 5-phosphate</name>
        <dbReference type="ChEBI" id="CHEBI:57792"/>
    </ligand>
</feature>
<feature type="binding site" evidence="1">
    <location>
        <position position="153"/>
    </location>
    <ligand>
        <name>Mn(2+)</name>
        <dbReference type="ChEBI" id="CHEBI:29035"/>
    </ligand>
</feature>
<feature type="binding site" evidence="1">
    <location>
        <position position="177"/>
    </location>
    <ligand>
        <name>1-deoxy-D-xylulose 5-phosphate</name>
        <dbReference type="ChEBI" id="CHEBI:57792"/>
    </ligand>
</feature>
<feature type="binding site" evidence="1">
    <location>
        <position position="200"/>
    </location>
    <ligand>
        <name>1-deoxy-D-xylulose 5-phosphate</name>
        <dbReference type="ChEBI" id="CHEBI:57792"/>
    </ligand>
</feature>
<feature type="binding site" evidence="1">
    <location>
        <position position="206"/>
    </location>
    <ligand>
        <name>NADPH</name>
        <dbReference type="ChEBI" id="CHEBI:57783"/>
    </ligand>
</feature>
<feature type="binding site" evidence="1">
    <location>
        <position position="213"/>
    </location>
    <ligand>
        <name>1-deoxy-D-xylulose 5-phosphate</name>
        <dbReference type="ChEBI" id="CHEBI:57792"/>
    </ligand>
</feature>
<feature type="binding site" evidence="1">
    <location>
        <position position="218"/>
    </location>
    <ligand>
        <name>1-deoxy-D-xylulose 5-phosphate</name>
        <dbReference type="ChEBI" id="CHEBI:57792"/>
    </ligand>
</feature>
<feature type="binding site" evidence="1">
    <location>
        <position position="219"/>
    </location>
    <ligand>
        <name>1-deoxy-D-xylulose 5-phosphate</name>
        <dbReference type="ChEBI" id="CHEBI:57792"/>
    </ligand>
</feature>
<feature type="binding site" evidence="1">
    <location>
        <position position="222"/>
    </location>
    <ligand>
        <name>1-deoxy-D-xylulose 5-phosphate</name>
        <dbReference type="ChEBI" id="CHEBI:57792"/>
    </ligand>
</feature>
<feature type="binding site" evidence="1">
    <location>
        <position position="222"/>
    </location>
    <ligand>
        <name>Mn(2+)</name>
        <dbReference type="ChEBI" id="CHEBI:29035"/>
    </ligand>
</feature>
<keyword id="KW-0414">Isoprene biosynthesis</keyword>
<keyword id="KW-0464">Manganese</keyword>
<keyword id="KW-0479">Metal-binding</keyword>
<keyword id="KW-0521">NADP</keyword>
<keyword id="KW-0560">Oxidoreductase</keyword>
<keyword id="KW-1185">Reference proteome</keyword>